<proteinExistence type="inferred from homology"/>
<organism>
    <name type="scientific">Staphylococcus epidermidis (strain ATCC 35984 / DSM 28319 / BCRC 17069 / CCUG 31568 / BM 3577 / RP62A)</name>
    <dbReference type="NCBI Taxonomy" id="176279"/>
    <lineage>
        <taxon>Bacteria</taxon>
        <taxon>Bacillati</taxon>
        <taxon>Bacillota</taxon>
        <taxon>Bacilli</taxon>
        <taxon>Bacillales</taxon>
        <taxon>Staphylococcaceae</taxon>
        <taxon>Staphylococcus</taxon>
    </lineage>
</organism>
<keyword id="KW-1003">Cell membrane</keyword>
<keyword id="KW-0407">Ion channel</keyword>
<keyword id="KW-0406">Ion transport</keyword>
<keyword id="KW-0472">Membrane</keyword>
<keyword id="KW-0479">Metal-binding</keyword>
<keyword id="KW-1185">Reference proteome</keyword>
<keyword id="KW-0915">Sodium</keyword>
<keyword id="KW-0812">Transmembrane</keyword>
<keyword id="KW-1133">Transmembrane helix</keyword>
<keyword id="KW-0813">Transport</keyword>
<evidence type="ECO:0000255" key="1">
    <source>
        <dbReference type="HAMAP-Rule" id="MF_00454"/>
    </source>
</evidence>
<gene>
    <name evidence="1" type="primary">fluC2</name>
    <name evidence="1" type="synonym">crcB2</name>
    <name type="ordered locus">SERP1339</name>
</gene>
<sequence length="117" mass="12819">MITILLVMLGGGIGAVLRALITNICQRLFNSKIPIATSIVNITGSLIIGFMMGHALDSHHMFPFFVTGVLGGLTTFSTLSSELVNMLSPQFKPIRFVVYSLLQFILGFIACFYGYRI</sequence>
<comment type="function">
    <text evidence="1">Fluoride-specific ion channel. Important for reducing fluoride concentration in the cell, thus reducing its toxicity.</text>
</comment>
<comment type="catalytic activity">
    <reaction evidence="1">
        <text>fluoride(in) = fluoride(out)</text>
        <dbReference type="Rhea" id="RHEA:76159"/>
        <dbReference type="ChEBI" id="CHEBI:17051"/>
    </reaction>
    <physiologicalReaction direction="left-to-right" evidence="1">
        <dbReference type="Rhea" id="RHEA:76160"/>
    </physiologicalReaction>
</comment>
<comment type="activity regulation">
    <text evidence="1">Na(+) is not transported, but it plays an essential structural role and its presence is essential for fluoride channel function.</text>
</comment>
<comment type="subcellular location">
    <subcellularLocation>
        <location evidence="1">Cell membrane</location>
        <topology evidence="1">Multi-pass membrane protein</topology>
    </subcellularLocation>
</comment>
<comment type="similarity">
    <text evidence="1">Belongs to the fluoride channel Fluc/FEX (TC 1.A.43) family.</text>
</comment>
<reference key="1">
    <citation type="journal article" date="2005" name="J. Bacteriol.">
        <title>Insights on evolution of virulence and resistance from the complete genome analysis of an early methicillin-resistant Staphylococcus aureus strain and a biofilm-producing methicillin-resistant Staphylococcus epidermidis strain.</title>
        <authorList>
            <person name="Gill S.R."/>
            <person name="Fouts D.E."/>
            <person name="Archer G.L."/>
            <person name="Mongodin E.F."/>
            <person name="DeBoy R.T."/>
            <person name="Ravel J."/>
            <person name="Paulsen I.T."/>
            <person name="Kolonay J.F."/>
            <person name="Brinkac L.M."/>
            <person name="Beanan M.J."/>
            <person name="Dodson R.J."/>
            <person name="Daugherty S.C."/>
            <person name="Madupu R."/>
            <person name="Angiuoli S.V."/>
            <person name="Durkin A.S."/>
            <person name="Haft D.H."/>
            <person name="Vamathevan J.J."/>
            <person name="Khouri H."/>
            <person name="Utterback T.R."/>
            <person name="Lee C."/>
            <person name="Dimitrov G."/>
            <person name="Jiang L."/>
            <person name="Qin H."/>
            <person name="Weidman J."/>
            <person name="Tran K."/>
            <person name="Kang K.H."/>
            <person name="Hance I.R."/>
            <person name="Nelson K.E."/>
            <person name="Fraser C.M."/>
        </authorList>
    </citation>
    <scope>NUCLEOTIDE SEQUENCE [LARGE SCALE GENOMIC DNA]</scope>
    <source>
        <strain>ATCC 35984 / DSM 28319 / BCRC 17069 / CCUG 31568 / BM 3577 / RP62A</strain>
    </source>
</reference>
<name>FLUC2_STAEQ</name>
<feature type="chain" id="PRO_0000110188" description="Fluoride-specific ion channel FluC 2">
    <location>
        <begin position="1"/>
        <end position="117"/>
    </location>
</feature>
<feature type="transmembrane region" description="Helical" evidence="1">
    <location>
        <begin position="1"/>
        <end position="21"/>
    </location>
</feature>
<feature type="transmembrane region" description="Helical" evidence="1">
    <location>
        <begin position="33"/>
        <end position="53"/>
    </location>
</feature>
<feature type="transmembrane region" description="Helical" evidence="1">
    <location>
        <begin position="61"/>
        <end position="81"/>
    </location>
</feature>
<feature type="transmembrane region" description="Helical" evidence="1">
    <location>
        <begin position="94"/>
        <end position="114"/>
    </location>
</feature>
<feature type="binding site" evidence="1">
    <location>
        <position position="71"/>
    </location>
    <ligand>
        <name>Na(+)</name>
        <dbReference type="ChEBI" id="CHEBI:29101"/>
        <note>structural</note>
    </ligand>
</feature>
<feature type="binding site" evidence="1">
    <location>
        <position position="74"/>
    </location>
    <ligand>
        <name>Na(+)</name>
        <dbReference type="ChEBI" id="CHEBI:29101"/>
        <note>structural</note>
    </ligand>
</feature>
<dbReference type="EMBL" id="CP000029">
    <property type="protein sequence ID" value="AAW54682.1"/>
    <property type="molecule type" value="Genomic_DNA"/>
</dbReference>
<dbReference type="RefSeq" id="WP_001830729.1">
    <property type="nucleotide sequence ID" value="NC_002976.3"/>
</dbReference>
<dbReference type="SMR" id="Q5HND0"/>
<dbReference type="STRING" id="176279.SERP1339"/>
<dbReference type="KEGG" id="ser:SERP1339"/>
<dbReference type="eggNOG" id="COG0239">
    <property type="taxonomic scope" value="Bacteria"/>
</dbReference>
<dbReference type="HOGENOM" id="CLU_114342_2_3_9"/>
<dbReference type="Proteomes" id="UP000000531">
    <property type="component" value="Chromosome"/>
</dbReference>
<dbReference type="GO" id="GO:0005886">
    <property type="term" value="C:plasma membrane"/>
    <property type="evidence" value="ECO:0007669"/>
    <property type="project" value="UniProtKB-SubCell"/>
</dbReference>
<dbReference type="GO" id="GO:0062054">
    <property type="term" value="F:fluoride channel activity"/>
    <property type="evidence" value="ECO:0007669"/>
    <property type="project" value="UniProtKB-UniRule"/>
</dbReference>
<dbReference type="GO" id="GO:0046872">
    <property type="term" value="F:metal ion binding"/>
    <property type="evidence" value="ECO:0007669"/>
    <property type="project" value="UniProtKB-KW"/>
</dbReference>
<dbReference type="GO" id="GO:0140114">
    <property type="term" value="P:cellular detoxification of fluoride"/>
    <property type="evidence" value="ECO:0007669"/>
    <property type="project" value="UniProtKB-UniRule"/>
</dbReference>
<dbReference type="HAMAP" id="MF_00454">
    <property type="entry name" value="FluC"/>
    <property type="match status" value="1"/>
</dbReference>
<dbReference type="InterPro" id="IPR003691">
    <property type="entry name" value="FluC"/>
</dbReference>
<dbReference type="PANTHER" id="PTHR28259">
    <property type="entry name" value="FLUORIDE EXPORT PROTEIN 1-RELATED"/>
    <property type="match status" value="1"/>
</dbReference>
<dbReference type="PANTHER" id="PTHR28259:SF16">
    <property type="entry name" value="FLUORIDE-SPECIFIC ION CHANNEL FLUC 2"/>
    <property type="match status" value="1"/>
</dbReference>
<dbReference type="Pfam" id="PF02537">
    <property type="entry name" value="CRCB"/>
    <property type="match status" value="1"/>
</dbReference>
<accession>Q5HND0</accession>
<protein>
    <recommendedName>
        <fullName evidence="1">Fluoride-specific ion channel FluC 2</fullName>
    </recommendedName>
</protein>